<organism>
    <name type="scientific">Frankia casuarinae (strain DSM 45818 / CECT 9043 / HFP020203 / CcI3)</name>
    <dbReference type="NCBI Taxonomy" id="106370"/>
    <lineage>
        <taxon>Bacteria</taxon>
        <taxon>Bacillati</taxon>
        <taxon>Actinomycetota</taxon>
        <taxon>Actinomycetes</taxon>
        <taxon>Frankiales</taxon>
        <taxon>Frankiaceae</taxon>
        <taxon>Frankia</taxon>
    </lineage>
</organism>
<keyword id="KW-0067">ATP-binding</keyword>
<keyword id="KW-0131">Cell cycle</keyword>
<keyword id="KW-0132">Cell division</keyword>
<keyword id="KW-0133">Cell shape</keyword>
<keyword id="KW-0961">Cell wall biogenesis/degradation</keyword>
<keyword id="KW-0963">Cytoplasm</keyword>
<keyword id="KW-0436">Ligase</keyword>
<keyword id="KW-0547">Nucleotide-binding</keyword>
<keyword id="KW-0573">Peptidoglycan synthesis</keyword>
<keyword id="KW-1185">Reference proteome</keyword>
<reference key="1">
    <citation type="journal article" date="2007" name="Genome Res.">
        <title>Genome characteristics of facultatively symbiotic Frankia sp. strains reflect host range and host plant biogeography.</title>
        <authorList>
            <person name="Normand P."/>
            <person name="Lapierre P."/>
            <person name="Tisa L.S."/>
            <person name="Gogarten J.P."/>
            <person name="Alloisio N."/>
            <person name="Bagnarol E."/>
            <person name="Bassi C.A."/>
            <person name="Berry A.M."/>
            <person name="Bickhart D.M."/>
            <person name="Choisne N."/>
            <person name="Couloux A."/>
            <person name="Cournoyer B."/>
            <person name="Cruveiller S."/>
            <person name="Daubin V."/>
            <person name="Demange N."/>
            <person name="Francino M.P."/>
            <person name="Goltsman E."/>
            <person name="Huang Y."/>
            <person name="Kopp O.R."/>
            <person name="Labarre L."/>
            <person name="Lapidus A."/>
            <person name="Lavire C."/>
            <person name="Marechal J."/>
            <person name="Martinez M."/>
            <person name="Mastronunzio J.E."/>
            <person name="Mullin B.C."/>
            <person name="Niemann J."/>
            <person name="Pujic P."/>
            <person name="Rawnsley T."/>
            <person name="Rouy Z."/>
            <person name="Schenowitz C."/>
            <person name="Sellstedt A."/>
            <person name="Tavares F."/>
            <person name="Tomkins J.P."/>
            <person name="Vallenet D."/>
            <person name="Valverde C."/>
            <person name="Wall L.G."/>
            <person name="Wang Y."/>
            <person name="Medigue C."/>
            <person name="Benson D.R."/>
        </authorList>
    </citation>
    <scope>NUCLEOTIDE SEQUENCE [LARGE SCALE GENOMIC DNA]</scope>
    <source>
        <strain>DSM 45818 / CECT 9043 / HFP020203 / CcI3</strain>
    </source>
</reference>
<sequence length="502" mass="52160">MTGQRTQHVHFLGIGGSGLSPLAQIHLAGGGTVSGSDSEDSPRVATLRARGVPIRIGATPGPAAFAAELAGADVVVASSALPDDHPEIVAARALGLPVRRRSEWLPELTAGYRLVAVAGSHGKSTTSAMLTLVLRAAGLDPTAVIGAEVSQLGGNALAGSGDVFVLESDEYGGAFAGLDPSIAVITNVEWEHPDVFPDEASVRTAFAAFARRVRPGGRLVVCGDHPGVVAVLTELGRQRPGNDVAVNDVAVIDYGFGAERHWRAVDVVTTAGDDMTRATVLRAGQEIGALTLTVPGRHSVLNALAVLATATELGVAPAQTLTTLTTFTGAARRFEFVGFWNGPADSTGVGPAGGPGSLEVIDDYAHHPTEVRLTLAAARSRARGRQIWTVLQPHTFSRFAALLDDFAAAFSDADRVYVTDIYAARETDDLGLHAVDLVKRVSEPAATYYVSWPELVERLATDVRVTLSDEASRGILLLTLGAGTITTVGPRLLAALGFSAAG</sequence>
<protein>
    <recommendedName>
        <fullName evidence="1">UDP-N-acetylmuramate--L-alanine ligase</fullName>
        <ecNumber evidence="1">6.3.2.8</ecNumber>
    </recommendedName>
    <alternativeName>
        <fullName evidence="1">UDP-N-acetylmuramoyl-L-alanine synthetase</fullName>
    </alternativeName>
</protein>
<proteinExistence type="inferred from homology"/>
<gene>
    <name evidence="1" type="primary">murC</name>
    <name type="ordered locus">Francci3_1417</name>
</gene>
<dbReference type="EC" id="6.3.2.8" evidence="1"/>
<dbReference type="EMBL" id="CP000249">
    <property type="protein sequence ID" value="ABD10794.1"/>
    <property type="molecule type" value="Genomic_DNA"/>
</dbReference>
<dbReference type="RefSeq" id="WP_011435859.1">
    <property type="nucleotide sequence ID" value="NZ_JENI01000072.1"/>
</dbReference>
<dbReference type="SMR" id="Q2JD48"/>
<dbReference type="STRING" id="106370.Francci3_1417"/>
<dbReference type="KEGG" id="fra:Francci3_1417"/>
<dbReference type="eggNOG" id="COG0773">
    <property type="taxonomic scope" value="Bacteria"/>
</dbReference>
<dbReference type="HOGENOM" id="CLU_028104_2_0_11"/>
<dbReference type="OrthoDB" id="9804126at2"/>
<dbReference type="PhylomeDB" id="Q2JD48"/>
<dbReference type="UniPathway" id="UPA00219"/>
<dbReference type="Proteomes" id="UP000001937">
    <property type="component" value="Chromosome"/>
</dbReference>
<dbReference type="GO" id="GO:0005737">
    <property type="term" value="C:cytoplasm"/>
    <property type="evidence" value="ECO:0007669"/>
    <property type="project" value="UniProtKB-SubCell"/>
</dbReference>
<dbReference type="GO" id="GO:0005524">
    <property type="term" value="F:ATP binding"/>
    <property type="evidence" value="ECO:0007669"/>
    <property type="project" value="UniProtKB-UniRule"/>
</dbReference>
<dbReference type="GO" id="GO:0008763">
    <property type="term" value="F:UDP-N-acetylmuramate-L-alanine ligase activity"/>
    <property type="evidence" value="ECO:0007669"/>
    <property type="project" value="UniProtKB-UniRule"/>
</dbReference>
<dbReference type="GO" id="GO:0051301">
    <property type="term" value="P:cell division"/>
    <property type="evidence" value="ECO:0007669"/>
    <property type="project" value="UniProtKB-KW"/>
</dbReference>
<dbReference type="GO" id="GO:0071555">
    <property type="term" value="P:cell wall organization"/>
    <property type="evidence" value="ECO:0007669"/>
    <property type="project" value="UniProtKB-KW"/>
</dbReference>
<dbReference type="GO" id="GO:0009252">
    <property type="term" value="P:peptidoglycan biosynthetic process"/>
    <property type="evidence" value="ECO:0007669"/>
    <property type="project" value="UniProtKB-UniRule"/>
</dbReference>
<dbReference type="GO" id="GO:0008360">
    <property type="term" value="P:regulation of cell shape"/>
    <property type="evidence" value="ECO:0007669"/>
    <property type="project" value="UniProtKB-KW"/>
</dbReference>
<dbReference type="Gene3D" id="3.90.190.20">
    <property type="entry name" value="Mur ligase, C-terminal domain"/>
    <property type="match status" value="1"/>
</dbReference>
<dbReference type="Gene3D" id="3.40.1190.10">
    <property type="entry name" value="Mur-like, catalytic domain"/>
    <property type="match status" value="1"/>
</dbReference>
<dbReference type="Gene3D" id="3.40.50.720">
    <property type="entry name" value="NAD(P)-binding Rossmann-like Domain"/>
    <property type="match status" value="1"/>
</dbReference>
<dbReference type="HAMAP" id="MF_00046">
    <property type="entry name" value="MurC"/>
    <property type="match status" value="1"/>
</dbReference>
<dbReference type="InterPro" id="IPR036565">
    <property type="entry name" value="Mur-like_cat_sf"/>
</dbReference>
<dbReference type="InterPro" id="IPR004101">
    <property type="entry name" value="Mur_ligase_C"/>
</dbReference>
<dbReference type="InterPro" id="IPR036615">
    <property type="entry name" value="Mur_ligase_C_dom_sf"/>
</dbReference>
<dbReference type="InterPro" id="IPR013221">
    <property type="entry name" value="Mur_ligase_cen"/>
</dbReference>
<dbReference type="InterPro" id="IPR000713">
    <property type="entry name" value="Mur_ligase_N"/>
</dbReference>
<dbReference type="InterPro" id="IPR050061">
    <property type="entry name" value="MurCDEF_pg_biosynth"/>
</dbReference>
<dbReference type="InterPro" id="IPR005758">
    <property type="entry name" value="UDP-N-AcMur_Ala_ligase_MurC"/>
</dbReference>
<dbReference type="NCBIfam" id="TIGR01082">
    <property type="entry name" value="murC"/>
    <property type="match status" value="1"/>
</dbReference>
<dbReference type="PANTHER" id="PTHR43445:SF3">
    <property type="entry name" value="UDP-N-ACETYLMURAMATE--L-ALANINE LIGASE"/>
    <property type="match status" value="1"/>
</dbReference>
<dbReference type="PANTHER" id="PTHR43445">
    <property type="entry name" value="UDP-N-ACETYLMURAMATE--L-ALANINE LIGASE-RELATED"/>
    <property type="match status" value="1"/>
</dbReference>
<dbReference type="Pfam" id="PF01225">
    <property type="entry name" value="Mur_ligase"/>
    <property type="match status" value="1"/>
</dbReference>
<dbReference type="Pfam" id="PF02875">
    <property type="entry name" value="Mur_ligase_C"/>
    <property type="match status" value="1"/>
</dbReference>
<dbReference type="Pfam" id="PF08245">
    <property type="entry name" value="Mur_ligase_M"/>
    <property type="match status" value="1"/>
</dbReference>
<dbReference type="SUPFAM" id="SSF51984">
    <property type="entry name" value="MurCD N-terminal domain"/>
    <property type="match status" value="1"/>
</dbReference>
<dbReference type="SUPFAM" id="SSF53623">
    <property type="entry name" value="MurD-like peptide ligases, catalytic domain"/>
    <property type="match status" value="1"/>
</dbReference>
<dbReference type="SUPFAM" id="SSF53244">
    <property type="entry name" value="MurD-like peptide ligases, peptide-binding domain"/>
    <property type="match status" value="1"/>
</dbReference>
<comment type="function">
    <text evidence="1">Cell wall formation.</text>
</comment>
<comment type="catalytic activity">
    <reaction evidence="1">
        <text>UDP-N-acetyl-alpha-D-muramate + L-alanine + ATP = UDP-N-acetyl-alpha-D-muramoyl-L-alanine + ADP + phosphate + H(+)</text>
        <dbReference type="Rhea" id="RHEA:23372"/>
        <dbReference type="ChEBI" id="CHEBI:15378"/>
        <dbReference type="ChEBI" id="CHEBI:30616"/>
        <dbReference type="ChEBI" id="CHEBI:43474"/>
        <dbReference type="ChEBI" id="CHEBI:57972"/>
        <dbReference type="ChEBI" id="CHEBI:70757"/>
        <dbReference type="ChEBI" id="CHEBI:83898"/>
        <dbReference type="ChEBI" id="CHEBI:456216"/>
        <dbReference type="EC" id="6.3.2.8"/>
    </reaction>
</comment>
<comment type="pathway">
    <text evidence="1">Cell wall biogenesis; peptidoglycan biosynthesis.</text>
</comment>
<comment type="subcellular location">
    <subcellularLocation>
        <location evidence="1">Cytoplasm</location>
    </subcellularLocation>
</comment>
<comment type="similarity">
    <text evidence="1">Belongs to the MurCDEF family.</text>
</comment>
<evidence type="ECO:0000255" key="1">
    <source>
        <dbReference type="HAMAP-Rule" id="MF_00046"/>
    </source>
</evidence>
<name>MURC_FRACC</name>
<feature type="chain" id="PRO_0000242557" description="UDP-N-acetylmuramate--L-alanine ligase">
    <location>
        <begin position="1"/>
        <end position="502"/>
    </location>
</feature>
<feature type="binding site" evidence="1">
    <location>
        <begin position="119"/>
        <end position="125"/>
    </location>
    <ligand>
        <name>ATP</name>
        <dbReference type="ChEBI" id="CHEBI:30616"/>
    </ligand>
</feature>
<accession>Q2JD48</accession>